<protein>
    <recommendedName>
        <fullName>Ankyrin repeat domain-containing protein 54</fullName>
    </recommendedName>
</protein>
<comment type="function">
    <text evidence="1">Plays an important role in regulating intracellular signaling events associated with erythroid terminal differentiation.</text>
</comment>
<comment type="subunit">
    <text evidence="1">Interacts (via ankyrin repeat region) with LYN (via SH3-domain) in an activation-independent status of LYN. Forms a multiprotein complex with LYN and HCLS1. Interacts with TSN2, VAV1, DBNL and LASP1.</text>
</comment>
<comment type="subcellular location">
    <subcellularLocation>
        <location evidence="1">Nucleus</location>
    </subcellularLocation>
    <subcellularLocation>
        <location evidence="1">Cytoplasm</location>
    </subcellularLocation>
    <subcellularLocation>
        <location evidence="1">Midbody</location>
    </subcellularLocation>
    <text>Shuttles between nucleus and cytoplasm during the cell cycle.</text>
</comment>
<gene>
    <name type="primary">ANKRD54</name>
</gene>
<sequence length="299" mass="32466">MAAAAGGADDESRSGRSSSDGECAVAPEPLTGPEGLFSFADFGSALGGGAGLPGRASGGAQSPLRYLHVLWQQDAEPRDELRCKIPAGRLRRAARPHRRLGPTGKEVHALKRLRDSANANDVETVQQLLEEGTDPCAADDKGRTALHFASCNGNDQIVQLLLDHGADPNQRDGLGNTPLHLAACTNHAPVITTLLRGGARVDALDRAGRTPLHLAKSKLNILQEGHSQCLEAVRLEVKQIIQMLREYLERLGRHEQRERLDDLCTRLQKTSTREQVDEVTDLLASFTSLSLQMQNMEKR</sequence>
<proteinExistence type="evidence at transcript level"/>
<name>ANR54_BOVIN</name>
<keyword id="KW-0007">Acetylation</keyword>
<keyword id="KW-0040">ANK repeat</keyword>
<keyword id="KW-0963">Cytoplasm</keyword>
<keyword id="KW-0539">Nucleus</keyword>
<keyword id="KW-0597">Phosphoprotein</keyword>
<keyword id="KW-1185">Reference proteome</keyword>
<keyword id="KW-0677">Repeat</keyword>
<organism>
    <name type="scientific">Bos taurus</name>
    <name type="common">Bovine</name>
    <dbReference type="NCBI Taxonomy" id="9913"/>
    <lineage>
        <taxon>Eukaryota</taxon>
        <taxon>Metazoa</taxon>
        <taxon>Chordata</taxon>
        <taxon>Craniata</taxon>
        <taxon>Vertebrata</taxon>
        <taxon>Euteleostomi</taxon>
        <taxon>Mammalia</taxon>
        <taxon>Eutheria</taxon>
        <taxon>Laurasiatheria</taxon>
        <taxon>Artiodactyla</taxon>
        <taxon>Ruminantia</taxon>
        <taxon>Pecora</taxon>
        <taxon>Bovidae</taxon>
        <taxon>Bovinae</taxon>
        <taxon>Bos</taxon>
    </lineage>
</organism>
<dbReference type="EMBL" id="BC116085">
    <property type="protein sequence ID" value="AAI16086.1"/>
    <property type="molecule type" value="mRNA"/>
</dbReference>
<dbReference type="RefSeq" id="NP_001069605.1">
    <property type="nucleotide sequence ID" value="NM_001076137.1"/>
</dbReference>
<dbReference type="SMR" id="Q1LZC5"/>
<dbReference type="FunCoup" id="Q1LZC5">
    <property type="interactions" value="2949"/>
</dbReference>
<dbReference type="STRING" id="9913.ENSBTAP00000014280"/>
<dbReference type="iPTMnet" id="Q1LZC5"/>
<dbReference type="PaxDb" id="9913-ENSBTAP00000014280"/>
<dbReference type="Ensembl" id="ENSBTAT00000014280.6">
    <property type="protein sequence ID" value="ENSBTAP00000014280.5"/>
    <property type="gene ID" value="ENSBTAG00000010789.7"/>
</dbReference>
<dbReference type="GeneID" id="538961"/>
<dbReference type="KEGG" id="bta:538961"/>
<dbReference type="CTD" id="129138"/>
<dbReference type="VEuPathDB" id="HostDB:ENSBTAG00000010789"/>
<dbReference type="VGNC" id="VGNC:25937">
    <property type="gene designation" value="ANKRD54"/>
</dbReference>
<dbReference type="eggNOG" id="KOG0504">
    <property type="taxonomic scope" value="Eukaryota"/>
</dbReference>
<dbReference type="GeneTree" id="ENSGT00940000157805"/>
<dbReference type="HOGENOM" id="CLU_072816_0_0_1"/>
<dbReference type="InParanoid" id="Q1LZC5"/>
<dbReference type="OMA" id="IQMRPSG"/>
<dbReference type="OrthoDB" id="496981at2759"/>
<dbReference type="TreeFam" id="TF330790"/>
<dbReference type="Proteomes" id="UP000009136">
    <property type="component" value="Chromosome 5"/>
</dbReference>
<dbReference type="Bgee" id="ENSBTAG00000010789">
    <property type="expression patterns" value="Expressed in retina and 104 other cell types or tissues"/>
</dbReference>
<dbReference type="GO" id="GO:0005737">
    <property type="term" value="C:cytoplasm"/>
    <property type="evidence" value="ECO:0000250"/>
    <property type="project" value="UniProtKB"/>
</dbReference>
<dbReference type="GO" id="GO:0030496">
    <property type="term" value="C:midbody"/>
    <property type="evidence" value="ECO:0000250"/>
    <property type="project" value="UniProtKB"/>
</dbReference>
<dbReference type="GO" id="GO:0005634">
    <property type="term" value="C:nucleus"/>
    <property type="evidence" value="ECO:0000250"/>
    <property type="project" value="UniProtKB"/>
</dbReference>
<dbReference type="GO" id="GO:0019887">
    <property type="term" value="F:protein kinase regulator activity"/>
    <property type="evidence" value="ECO:0000318"/>
    <property type="project" value="GO_Central"/>
</dbReference>
<dbReference type="GO" id="GO:0044877">
    <property type="term" value="F:protein-containing complex binding"/>
    <property type="evidence" value="ECO:0007669"/>
    <property type="project" value="Ensembl"/>
</dbReference>
<dbReference type="GO" id="GO:0006913">
    <property type="term" value="P:nucleocytoplasmic transport"/>
    <property type="evidence" value="ECO:0007669"/>
    <property type="project" value="Ensembl"/>
</dbReference>
<dbReference type="GO" id="GO:0045648">
    <property type="term" value="P:positive regulation of erythrocyte differentiation"/>
    <property type="evidence" value="ECO:0000250"/>
    <property type="project" value="UniProtKB"/>
</dbReference>
<dbReference type="GO" id="GO:1902531">
    <property type="term" value="P:regulation of intracellular signal transduction"/>
    <property type="evidence" value="ECO:0000250"/>
    <property type="project" value="UniProtKB"/>
</dbReference>
<dbReference type="FunFam" id="1.25.40.20:FF:000108">
    <property type="entry name" value="Ankyrin repeat domain-containing protein 54"/>
    <property type="match status" value="1"/>
</dbReference>
<dbReference type="FunFam" id="1.25.40.20:FF:000162">
    <property type="entry name" value="Ankyrin repeat domain-containing protein 54"/>
    <property type="match status" value="1"/>
</dbReference>
<dbReference type="Gene3D" id="1.25.40.20">
    <property type="entry name" value="Ankyrin repeat-containing domain"/>
    <property type="match status" value="2"/>
</dbReference>
<dbReference type="InterPro" id="IPR002110">
    <property type="entry name" value="Ankyrin_rpt"/>
</dbReference>
<dbReference type="InterPro" id="IPR036770">
    <property type="entry name" value="Ankyrin_rpt-contain_sf"/>
</dbReference>
<dbReference type="PANTHER" id="PTHR24197:SF44">
    <property type="entry name" value="ANKYRIN REPEAT DOMAIN-CONTAINING PROTEIN 54"/>
    <property type="match status" value="1"/>
</dbReference>
<dbReference type="PANTHER" id="PTHR24197">
    <property type="entry name" value="ANKYRIN REPEAT DOMAIN-CONTAINING PROTEIN 61"/>
    <property type="match status" value="1"/>
</dbReference>
<dbReference type="Pfam" id="PF00023">
    <property type="entry name" value="Ank"/>
    <property type="match status" value="1"/>
</dbReference>
<dbReference type="Pfam" id="PF12796">
    <property type="entry name" value="Ank_2"/>
    <property type="match status" value="1"/>
</dbReference>
<dbReference type="SMART" id="SM00248">
    <property type="entry name" value="ANK"/>
    <property type="match status" value="4"/>
</dbReference>
<dbReference type="SUPFAM" id="SSF48403">
    <property type="entry name" value="Ankyrin repeat"/>
    <property type="match status" value="1"/>
</dbReference>
<dbReference type="PROSITE" id="PS50297">
    <property type="entry name" value="ANK_REP_REGION"/>
    <property type="match status" value="1"/>
</dbReference>
<dbReference type="PROSITE" id="PS50088">
    <property type="entry name" value="ANK_REPEAT"/>
    <property type="match status" value="2"/>
</dbReference>
<feature type="initiator methionine" description="Removed" evidence="2">
    <location>
        <position position="1"/>
    </location>
</feature>
<feature type="chain" id="PRO_0000274492" description="Ankyrin repeat domain-containing protein 54">
    <location>
        <begin position="2"/>
        <end position="299"/>
    </location>
</feature>
<feature type="repeat" description="ANK 1">
    <location>
        <begin position="108"/>
        <end position="137"/>
    </location>
</feature>
<feature type="repeat" description="ANK 2">
    <location>
        <begin position="141"/>
        <end position="170"/>
    </location>
</feature>
<feature type="repeat" description="ANK 3">
    <location>
        <begin position="174"/>
        <end position="203"/>
    </location>
</feature>
<feature type="repeat" description="ANK 4">
    <location>
        <begin position="207"/>
        <end position="239"/>
    </location>
</feature>
<feature type="region of interest" description="Disordered" evidence="3">
    <location>
        <begin position="1"/>
        <end position="32"/>
    </location>
</feature>
<feature type="region of interest" description="LYN-binding" evidence="1">
    <location>
        <begin position="140"/>
        <end position="240"/>
    </location>
</feature>
<feature type="short sequence motif" description="Nuclear localization signal (NLS)" evidence="1">
    <location>
        <begin position="98"/>
        <end position="116"/>
    </location>
</feature>
<feature type="short sequence motif" description="Nuclear export signal (NES)" evidence="1">
    <location>
        <begin position="282"/>
        <end position="292"/>
    </location>
</feature>
<feature type="modified residue" description="N-acetylalanine" evidence="2">
    <location>
        <position position="2"/>
    </location>
</feature>
<feature type="modified residue" description="Phosphoserine" evidence="2">
    <location>
        <position position="57"/>
    </location>
</feature>
<feature type="modified residue" description="Phosphoserine" evidence="2">
    <location>
        <position position="62"/>
    </location>
</feature>
<accession>Q1LZC5</accession>
<reference key="1">
    <citation type="submission" date="2006-05" db="EMBL/GenBank/DDBJ databases">
        <authorList>
            <consortium name="NIH - Mammalian Gene Collection (MGC) project"/>
        </authorList>
    </citation>
    <scope>NUCLEOTIDE SEQUENCE [LARGE SCALE MRNA]</scope>
    <source>
        <strain>Hereford</strain>
        <tissue>Ascending colon</tissue>
    </source>
</reference>
<evidence type="ECO:0000250" key="1"/>
<evidence type="ECO:0000250" key="2">
    <source>
        <dbReference type="UniProtKB" id="Q6NXT1"/>
    </source>
</evidence>
<evidence type="ECO:0000256" key="3">
    <source>
        <dbReference type="SAM" id="MobiDB-lite"/>
    </source>
</evidence>